<proteinExistence type="inferred from homology"/>
<name>NANE_MYCMS</name>
<reference key="1">
    <citation type="journal article" date="2004" name="Genome Res.">
        <title>The genome sequence of Mycoplasma mycoides subsp. mycoides SC type strain PG1T, the causative agent of contagious bovine pleuropneumonia (CBPP).</title>
        <authorList>
            <person name="Westberg J."/>
            <person name="Persson A."/>
            <person name="Holmberg A."/>
            <person name="Goesmann A."/>
            <person name="Lundeberg J."/>
            <person name="Johansson K.-E."/>
            <person name="Pettersson B."/>
            <person name="Uhlen M."/>
        </authorList>
    </citation>
    <scope>NUCLEOTIDE SEQUENCE [LARGE SCALE GENOMIC DNA]</scope>
    <source>
        <strain>CCUG 32753 / NCTC 10114 / PG1</strain>
    </source>
</reference>
<accession>Q6MT55</accession>
<keyword id="KW-0119">Carbohydrate metabolism</keyword>
<keyword id="KW-0413">Isomerase</keyword>
<keyword id="KW-1185">Reference proteome</keyword>
<protein>
    <recommendedName>
        <fullName evidence="1">Putative N-acetylmannosamine-6-phosphate 2-epimerase</fullName>
        <ecNumber evidence="1">5.1.3.9</ecNumber>
    </recommendedName>
    <alternativeName>
        <fullName evidence="1">ManNAc-6-P epimerase</fullName>
    </alternativeName>
</protein>
<gene>
    <name evidence="1" type="primary">nanE</name>
    <name type="ordered locus">MSC_0555</name>
</gene>
<evidence type="ECO:0000255" key="1">
    <source>
        <dbReference type="HAMAP-Rule" id="MF_01235"/>
    </source>
</evidence>
<sequence length="226" mass="25501">MNLIDQIKNTLIISCQAVDDEPLNDSYVLSKMCYALVLGGAKVLRLSQVEHIKKIKEVVNVPIIGLIKKHYDNSEVFITPTIKEVDQLVDLKVDIIALDATLRKRPDQDLTNLIKTIKTKYPNQLLMADCSNINDAINAQNLGFDLISTTLRGYTKDTLNHNNIENDYQFLKDLKKVITKPIIAEGGIWTPQQAKEILNLGIHSIVVGSAITRLHLIVKYWNDNLK</sequence>
<organism>
    <name type="scientific">Mycoplasma mycoides subsp. mycoides SC (strain CCUG 32753 / NCTC 10114 / PG1)</name>
    <dbReference type="NCBI Taxonomy" id="272632"/>
    <lineage>
        <taxon>Bacteria</taxon>
        <taxon>Bacillati</taxon>
        <taxon>Mycoplasmatota</taxon>
        <taxon>Mollicutes</taxon>
        <taxon>Mycoplasmataceae</taxon>
        <taxon>Mycoplasma</taxon>
    </lineage>
</organism>
<feature type="chain" id="PRO_0000179784" description="Putative N-acetylmannosamine-6-phosphate 2-epimerase">
    <location>
        <begin position="1"/>
        <end position="226"/>
    </location>
</feature>
<comment type="function">
    <text evidence="1">Converts N-acetylmannosamine-6-phosphate (ManNAc-6-P) to N-acetylglucosamine-6-phosphate (GlcNAc-6-P).</text>
</comment>
<comment type="catalytic activity">
    <reaction evidence="1">
        <text>an N-acyl-D-glucosamine 6-phosphate = an N-acyl-D-mannosamine 6-phosphate</text>
        <dbReference type="Rhea" id="RHEA:23932"/>
        <dbReference type="ChEBI" id="CHEBI:57599"/>
        <dbReference type="ChEBI" id="CHEBI:57666"/>
        <dbReference type="EC" id="5.1.3.9"/>
    </reaction>
</comment>
<comment type="pathway">
    <text evidence="1">Amino-sugar metabolism; N-acetylneuraminate degradation; D-fructose 6-phosphate from N-acetylneuraminate: step 3/5.</text>
</comment>
<comment type="similarity">
    <text evidence="1">Belongs to the NanE family.</text>
</comment>
<dbReference type="EC" id="5.1.3.9" evidence="1"/>
<dbReference type="EMBL" id="BX293980">
    <property type="protein sequence ID" value="CAE77181.1"/>
    <property type="molecule type" value="Genomic_DNA"/>
</dbReference>
<dbReference type="RefSeq" id="NP_975539.1">
    <property type="nucleotide sequence ID" value="NC_005364.2"/>
</dbReference>
<dbReference type="RefSeq" id="WP_011166737.1">
    <property type="nucleotide sequence ID" value="NC_005364.2"/>
</dbReference>
<dbReference type="SMR" id="Q6MT55"/>
<dbReference type="STRING" id="272632.MSC_0555"/>
<dbReference type="KEGG" id="mmy:MSC_0555"/>
<dbReference type="PATRIC" id="fig|272632.4.peg.599"/>
<dbReference type="eggNOG" id="COG3010">
    <property type="taxonomic scope" value="Bacteria"/>
</dbReference>
<dbReference type="HOGENOM" id="CLU_086300_1_0_14"/>
<dbReference type="UniPathway" id="UPA00629">
    <property type="reaction ID" value="UER00682"/>
</dbReference>
<dbReference type="Proteomes" id="UP000001016">
    <property type="component" value="Chromosome"/>
</dbReference>
<dbReference type="GO" id="GO:0005829">
    <property type="term" value="C:cytosol"/>
    <property type="evidence" value="ECO:0007669"/>
    <property type="project" value="TreeGrafter"/>
</dbReference>
<dbReference type="GO" id="GO:0047465">
    <property type="term" value="F:N-acylglucosamine-6-phosphate 2-epimerase activity"/>
    <property type="evidence" value="ECO:0007669"/>
    <property type="project" value="UniProtKB-EC"/>
</dbReference>
<dbReference type="GO" id="GO:0005975">
    <property type="term" value="P:carbohydrate metabolic process"/>
    <property type="evidence" value="ECO:0007669"/>
    <property type="project" value="UniProtKB-UniRule"/>
</dbReference>
<dbReference type="GO" id="GO:0006053">
    <property type="term" value="P:N-acetylmannosamine catabolic process"/>
    <property type="evidence" value="ECO:0007669"/>
    <property type="project" value="TreeGrafter"/>
</dbReference>
<dbReference type="GO" id="GO:0019262">
    <property type="term" value="P:N-acetylneuraminate catabolic process"/>
    <property type="evidence" value="ECO:0007669"/>
    <property type="project" value="UniProtKB-UniRule"/>
</dbReference>
<dbReference type="CDD" id="cd04729">
    <property type="entry name" value="NanE"/>
    <property type="match status" value="1"/>
</dbReference>
<dbReference type="FunFam" id="3.20.20.70:FF:000035">
    <property type="entry name" value="Putative N-acetylmannosamine-6-phosphate 2-epimerase"/>
    <property type="match status" value="1"/>
</dbReference>
<dbReference type="Gene3D" id="3.20.20.70">
    <property type="entry name" value="Aldolase class I"/>
    <property type="match status" value="1"/>
</dbReference>
<dbReference type="HAMAP" id="MF_01235">
    <property type="entry name" value="ManNAc6P_epimer"/>
    <property type="match status" value="1"/>
</dbReference>
<dbReference type="InterPro" id="IPR013785">
    <property type="entry name" value="Aldolase_TIM"/>
</dbReference>
<dbReference type="InterPro" id="IPR007260">
    <property type="entry name" value="NanE"/>
</dbReference>
<dbReference type="InterPro" id="IPR011060">
    <property type="entry name" value="RibuloseP-bd_barrel"/>
</dbReference>
<dbReference type="NCBIfam" id="NF002231">
    <property type="entry name" value="PRK01130.1"/>
    <property type="match status" value="1"/>
</dbReference>
<dbReference type="PANTHER" id="PTHR36204">
    <property type="entry name" value="N-ACETYLMANNOSAMINE-6-PHOSPHATE 2-EPIMERASE-RELATED"/>
    <property type="match status" value="1"/>
</dbReference>
<dbReference type="PANTHER" id="PTHR36204:SF1">
    <property type="entry name" value="N-ACETYLMANNOSAMINE-6-PHOSPHATE 2-EPIMERASE-RELATED"/>
    <property type="match status" value="1"/>
</dbReference>
<dbReference type="Pfam" id="PF04131">
    <property type="entry name" value="NanE"/>
    <property type="match status" value="1"/>
</dbReference>
<dbReference type="SUPFAM" id="SSF51366">
    <property type="entry name" value="Ribulose-phoshate binding barrel"/>
    <property type="match status" value="1"/>
</dbReference>